<proteinExistence type="evidence at transcript level"/>
<name>TPMT_PANTI</name>
<evidence type="ECO:0000250" key="1"/>
<evidence type="ECO:0000250" key="2">
    <source>
        <dbReference type="UniProtKB" id="P51580"/>
    </source>
</evidence>
<evidence type="ECO:0000305" key="3"/>
<feature type="chain" id="PRO_0000220109" description="Thiopurine S-methyltransferase">
    <location>
        <begin position="1"/>
        <end position="245"/>
    </location>
</feature>
<feature type="binding site" evidence="1">
    <location>
        <begin position="29"/>
        <end position="40"/>
    </location>
    <ligand>
        <name>S-adenosyl-L-methionine</name>
        <dbReference type="ChEBI" id="CHEBI:59789"/>
    </ligand>
</feature>
<feature type="binding site" evidence="1">
    <location>
        <position position="40"/>
    </location>
    <ligand>
        <name>substrate</name>
    </ligand>
</feature>
<feature type="binding site" evidence="1">
    <location>
        <position position="69"/>
    </location>
    <ligand>
        <name>S-adenosyl-L-methionine</name>
        <dbReference type="ChEBI" id="CHEBI:59789"/>
    </ligand>
</feature>
<feature type="binding site" evidence="1">
    <location>
        <position position="90"/>
    </location>
    <ligand>
        <name>S-adenosyl-L-methionine</name>
        <dbReference type="ChEBI" id="CHEBI:59789"/>
    </ligand>
</feature>
<feature type="binding site" evidence="1">
    <location>
        <position position="152"/>
    </location>
    <ligand>
        <name>S-adenosyl-L-methionine</name>
        <dbReference type="ChEBI" id="CHEBI:59789"/>
    </ligand>
</feature>
<feature type="modified residue" description="Phosphoserine" evidence="2">
    <location>
        <position position="14"/>
    </location>
</feature>
<feature type="modified residue" description="N6-acetyllysine" evidence="2">
    <location>
        <position position="58"/>
    </location>
</feature>
<keyword id="KW-0007">Acetylation</keyword>
<keyword id="KW-0963">Cytoplasm</keyword>
<keyword id="KW-0489">Methyltransferase</keyword>
<keyword id="KW-0597">Phosphoprotein</keyword>
<keyword id="KW-0949">S-adenosyl-L-methionine</keyword>
<keyword id="KW-0808">Transferase</keyword>
<dbReference type="EC" id="2.1.1.67"/>
<dbReference type="EMBL" id="AY827080">
    <property type="protein sequence ID" value="AAX37644.1"/>
    <property type="molecule type" value="mRNA"/>
</dbReference>
<dbReference type="RefSeq" id="XP_042841574.1">
    <property type="nucleotide sequence ID" value="XM_042985640.1"/>
</dbReference>
<dbReference type="SMR" id="Q3BCR2"/>
<dbReference type="GeneID" id="102956395"/>
<dbReference type="GO" id="GO:0005737">
    <property type="term" value="C:cytoplasm"/>
    <property type="evidence" value="ECO:0007669"/>
    <property type="project" value="UniProtKB-SubCell"/>
</dbReference>
<dbReference type="GO" id="GO:0008119">
    <property type="term" value="F:thiopurine S-methyltransferase activity"/>
    <property type="evidence" value="ECO:0007669"/>
    <property type="project" value="UniProtKB-EC"/>
</dbReference>
<dbReference type="GO" id="GO:0032259">
    <property type="term" value="P:methylation"/>
    <property type="evidence" value="ECO:0007669"/>
    <property type="project" value="UniProtKB-KW"/>
</dbReference>
<dbReference type="FunFam" id="3.40.50.150:FF:000101">
    <property type="entry name" value="Thiopurine S-methyltransferase"/>
    <property type="match status" value="1"/>
</dbReference>
<dbReference type="Gene3D" id="3.40.50.150">
    <property type="entry name" value="Vaccinia Virus protein VP39"/>
    <property type="match status" value="1"/>
</dbReference>
<dbReference type="HAMAP" id="MF_00812">
    <property type="entry name" value="Thiopur_methtran"/>
    <property type="match status" value="1"/>
</dbReference>
<dbReference type="InterPro" id="IPR029063">
    <property type="entry name" value="SAM-dependent_MTases_sf"/>
</dbReference>
<dbReference type="InterPro" id="IPR025835">
    <property type="entry name" value="Thiopurine_S-MeTrfase"/>
</dbReference>
<dbReference type="InterPro" id="IPR008854">
    <property type="entry name" value="TPMT"/>
</dbReference>
<dbReference type="PANTHER" id="PTHR10259">
    <property type="entry name" value="THIOPURINE S-METHYLTRANSFERASE"/>
    <property type="match status" value="1"/>
</dbReference>
<dbReference type="PANTHER" id="PTHR10259:SF11">
    <property type="entry name" value="THIOPURINE S-METHYLTRANSFERASE"/>
    <property type="match status" value="1"/>
</dbReference>
<dbReference type="Pfam" id="PF05724">
    <property type="entry name" value="TPMT"/>
    <property type="match status" value="1"/>
</dbReference>
<dbReference type="PIRSF" id="PIRSF023956">
    <property type="entry name" value="Thiopurine_S-methyltransferase"/>
    <property type="match status" value="1"/>
</dbReference>
<dbReference type="SUPFAM" id="SSF53335">
    <property type="entry name" value="S-adenosyl-L-methionine-dependent methyltransferases"/>
    <property type="match status" value="1"/>
</dbReference>
<dbReference type="PROSITE" id="PS51585">
    <property type="entry name" value="SAM_MT_TPMT"/>
    <property type="match status" value="1"/>
</dbReference>
<sequence length="245" mass="28293">MDDASTLIDVKEYSDTEVQKNRVLTLEEWREKWVDGKIGFHQEQGHQLLKKHLDTFLKGENVLRVFFPLCGKAVEMKWFADRGHCVVGVEISELGIREFFTEQNLSYSEEPIMEIPGAKVFKSSSGNISLYCCNLFDLPRVNIGKFDRIWDRGALVAVNPGDRKCYTDIMLSLTRKGFRYLLAVLSYDPTKHPGPPFYVPDAEIKNLFGSTCNIHCLEKVDVFEERHKSWGIDYIVEKLYLLTEK</sequence>
<reference key="1">
    <citation type="journal article" date="2005" name="Pharmacogenet. Genomics">
        <title>Thiopurine S-methyltransferase pharmacogenetics: variant allele functional and comparative genomics.</title>
        <authorList>
            <person name="Salavaggione O.E."/>
            <person name="Wang L."/>
            <person name="Wiepert M."/>
            <person name="Yee V.C."/>
            <person name="Weinshilboum R.M."/>
        </authorList>
    </citation>
    <scope>NUCLEOTIDE SEQUENCE [MRNA]</scope>
</reference>
<comment type="catalytic activity">
    <reaction evidence="2">
        <text>S-adenosyl-L-methionine + a thiopurine = S-adenosyl-L-homocysteine + a thiopurine S-methylether.</text>
        <dbReference type="EC" id="2.1.1.67"/>
    </reaction>
</comment>
<comment type="subunit">
    <text evidence="2">Monomer.</text>
</comment>
<comment type="subcellular location">
    <subcellularLocation>
        <location>Cytoplasm</location>
    </subcellularLocation>
</comment>
<comment type="similarity">
    <text evidence="3">Belongs to the class I-like SAM-binding methyltransferase superfamily. TPMT family.</text>
</comment>
<accession>Q3BCR2</accession>
<protein>
    <recommendedName>
        <fullName>Thiopurine S-methyltransferase</fullName>
        <ecNumber>2.1.1.67</ecNumber>
    </recommendedName>
    <alternativeName>
        <fullName>Thiopurine methyltransferase</fullName>
    </alternativeName>
</protein>
<organism>
    <name type="scientific">Panthera tigris</name>
    <name type="common">Tiger</name>
    <dbReference type="NCBI Taxonomy" id="9694"/>
    <lineage>
        <taxon>Eukaryota</taxon>
        <taxon>Metazoa</taxon>
        <taxon>Chordata</taxon>
        <taxon>Craniata</taxon>
        <taxon>Vertebrata</taxon>
        <taxon>Euteleostomi</taxon>
        <taxon>Mammalia</taxon>
        <taxon>Eutheria</taxon>
        <taxon>Laurasiatheria</taxon>
        <taxon>Carnivora</taxon>
        <taxon>Feliformia</taxon>
        <taxon>Felidae</taxon>
        <taxon>Pantherinae</taxon>
        <taxon>Panthera</taxon>
    </lineage>
</organism>
<gene>
    <name type="primary">TPMT</name>
</gene>